<comment type="function">
    <text evidence="4 5 6 7">Component of the extracellular signaling pathway that establishes the dorsal-ventral pathway of the embryo (PubMed:12493753, PubMed:9477324, PubMed:9618496). A protease cascade involving ndl, gd, snk and ea results in activation of the spz Toll receptor ligand; acts downstream of ndl but upstream of snk and ea (PubMed:20605458, PubMed:9477324). Activation of ea requires activation of the ndl-gd-snk protease cascade and sulfation of a vitelline membrane component by pip (PubMed:20605458). Localized activation of the Toll receptor in the ventral region of the embryo defines cell identities along the dorsal-ventral continuum (PubMed:9477324).</text>
</comment>
<comment type="subcellular location">
    <subcellularLocation>
        <location evidence="6">Secreted</location>
    </subcellularLocation>
</comment>
<comment type="alternative products">
    <event type="alternative splicing"/>
    <isoform>
        <id>O62589-1</id>
        <name evidence="11">D</name>
        <sequence type="displayed"/>
    </isoform>
    <isoform>
        <id>O62589-2</id>
        <name evidence="11">C</name>
        <name evidence="11">F</name>
        <sequence type="described" ref="VSP_054451"/>
    </isoform>
    <isoform>
        <id>O62589-3</id>
        <name evidence="11">E</name>
        <sequence type="described" ref="VSP_054451 VSP_054452 VSP_054453"/>
    </isoform>
</comment>
<comment type="tissue specificity">
    <text evidence="7">Expression begins in previtellogenic stages and is seen in germline-derived nurse cells of the germarium. Expression continues throughout oogenesis with transcripts from the nurse cells accumulating in the oocytes. Most abundant in the ovaries, the level of protein decreases from the moment of egg laying and is essentially gone by 4 hours.</text>
</comment>
<comment type="developmental stage">
    <text evidence="7">Expressed both maternally and zygotically.</text>
</comment>
<comment type="PTM">
    <text evidence="5">Proteolytically activated by the protease ndl.</text>
</comment>
<comment type="similarity">
    <text evidence="2">Belongs to the peptidase S1 family.</text>
</comment>
<comment type="sequence caution" evidence="10">
    <conflict type="erroneous initiation">
        <sequence resource="EMBL-CDS" id="ABG02140"/>
    </conflict>
    <text>Truncated N-terminus.</text>
</comment>
<comment type="sequence caution" evidence="10">
    <conflict type="miscellaneous discrepancy">
        <sequence resource="EMBL-CDS" id="ABG02140"/>
    </conflict>
    <text>Intron retention.</text>
</comment>
<comment type="sequence caution" evidence="10">
    <conflict type="erroneous initiation">
        <sequence resource="EMBL-CDS" id="ADK93997"/>
    </conflict>
    <text>Extended N-terminus.</text>
</comment>
<feature type="signal peptide" evidence="1">
    <location>
        <begin position="1"/>
        <end position="19"/>
    </location>
</feature>
<feature type="chain" id="PRO_0000028135" description="Serine protease gd" evidence="1">
    <location>
        <begin position="20"/>
        <end position="531"/>
    </location>
</feature>
<feature type="domain" description="Peptidase S1" evidence="2">
    <location>
        <begin position="246"/>
        <end position="531"/>
    </location>
</feature>
<feature type="region of interest" description="Disordered" evidence="3">
    <location>
        <begin position="155"/>
        <end position="174"/>
    </location>
</feature>
<feature type="active site" description="Charge relay system" evidence="2">
    <location>
        <position position="295"/>
    </location>
</feature>
<feature type="active site" description="Charge relay system" evidence="2">
    <location>
        <position position="350"/>
    </location>
</feature>
<feature type="active site" description="Charge relay system" evidence="2">
    <location>
        <position position="471"/>
    </location>
</feature>
<feature type="glycosylation site" description="N-linked (GlcNAc...) asparagine" evidence="1">
    <location>
        <position position="272"/>
    </location>
</feature>
<feature type="glycosylation site" description="N-linked (GlcNAc...) asparagine" evidence="1">
    <location>
        <position position="397"/>
    </location>
</feature>
<feature type="glycosylation site" description="N-linked (GlcNAc...) asparagine" evidence="1">
    <location>
        <position position="445"/>
    </location>
</feature>
<feature type="disulfide bond" evidence="2">
    <location>
        <begin position="280"/>
        <end position="296"/>
    </location>
</feature>
<feature type="disulfide bond" evidence="2">
    <location>
        <begin position="432"/>
        <end position="449"/>
    </location>
</feature>
<feature type="splice variant" id="VSP_054451" description="In isoform C and isoform E." evidence="8 9">
    <location>
        <begin position="72"/>
        <end position="74"/>
    </location>
</feature>
<feature type="splice variant" id="VSP_054452" description="In isoform E." evidence="10">
    <original>KPFAQ</original>
    <variation>YASGF</variation>
    <location>
        <begin position="178"/>
        <end position="182"/>
    </location>
</feature>
<feature type="splice variant" id="VSP_054453" description="In isoform E." evidence="10">
    <location>
        <begin position="183"/>
        <end position="531"/>
    </location>
</feature>
<feature type="mutagenesis site" description="Results in a defective gastrulation with excessive ventralization showing very prominent ventral furrow, no anterior displacement of posterior cells and only a small headfold on the dorsal side of the embryo." evidence="4">
    <original>Y</original>
    <variation>A</variation>
    <variation>P</variation>
    <location>
        <position position="513"/>
    </location>
</feature>
<proteinExistence type="evidence at protein level"/>
<evidence type="ECO:0000255" key="1"/>
<evidence type="ECO:0000255" key="2">
    <source>
        <dbReference type="PROSITE-ProRule" id="PRU00274"/>
    </source>
</evidence>
<evidence type="ECO:0000256" key="3">
    <source>
        <dbReference type="SAM" id="MobiDB-lite"/>
    </source>
</evidence>
<evidence type="ECO:0000269" key="4">
    <source>
    </source>
</evidence>
<evidence type="ECO:0000269" key="5">
    <source>
    </source>
</evidence>
<evidence type="ECO:0000269" key="6">
    <source>
    </source>
</evidence>
<evidence type="ECO:0000269" key="7">
    <source>
    </source>
</evidence>
<evidence type="ECO:0000303" key="8">
    <source>
    </source>
</evidence>
<evidence type="ECO:0000303" key="9">
    <source ref="4"/>
</evidence>
<evidence type="ECO:0000305" key="10"/>
<evidence type="ECO:0000312" key="11">
    <source>
        <dbReference type="FlyBase" id="FBgn0000808"/>
    </source>
</evidence>
<evidence type="ECO:0000312" key="12">
    <source>
        <dbReference type="Proteomes" id="UP000000803"/>
    </source>
</evidence>
<accession>O62589</accession>
<accession>D9PTR2</accession>
<accession>M9PEE0</accession>
<accession>M9PGY7</accession>
<accession>M9PJK1</accession>
<accession>Q1EC38</accession>
<reference key="1">
    <citation type="journal article" date="1998" name="Proc. Natl. Acad. Sci. U.S.A.">
        <title>The gastrulation defective gene of Drosophila melanogaster is a member of the serine protease superfamily.</title>
        <authorList>
            <person name="Konrad K.D."/>
            <person name="Goralski T.J."/>
            <person name="Mahowald A.P."/>
            <person name="Marsh J.L."/>
        </authorList>
    </citation>
    <scope>NUCLEOTIDE SEQUENCE [GENOMIC DNA / MRNA] (ISOFORM C)</scope>
    <scope>FUNCTION</scope>
    <scope>TISSUE SPECIFICITY</scope>
    <scope>DEVELOPMENTAL STAGE</scope>
    <source>
        <tissue>Embryo</tissue>
    </source>
</reference>
<reference key="2">
    <citation type="journal article" date="2000" name="Science">
        <title>The genome sequence of Drosophila melanogaster.</title>
        <authorList>
            <person name="Adams M.D."/>
            <person name="Celniker S.E."/>
            <person name="Holt R.A."/>
            <person name="Evans C.A."/>
            <person name="Gocayne J.D."/>
            <person name="Amanatides P.G."/>
            <person name="Scherer S.E."/>
            <person name="Li P.W."/>
            <person name="Hoskins R.A."/>
            <person name="Galle R.F."/>
            <person name="George R.A."/>
            <person name="Lewis S.E."/>
            <person name="Richards S."/>
            <person name="Ashburner M."/>
            <person name="Henderson S.N."/>
            <person name="Sutton G.G."/>
            <person name="Wortman J.R."/>
            <person name="Yandell M.D."/>
            <person name="Zhang Q."/>
            <person name="Chen L.X."/>
            <person name="Brandon R.C."/>
            <person name="Rogers Y.-H.C."/>
            <person name="Blazej R.G."/>
            <person name="Champe M."/>
            <person name="Pfeiffer B.D."/>
            <person name="Wan K.H."/>
            <person name="Doyle C."/>
            <person name="Baxter E.G."/>
            <person name="Helt G."/>
            <person name="Nelson C.R."/>
            <person name="Miklos G.L.G."/>
            <person name="Abril J.F."/>
            <person name="Agbayani A."/>
            <person name="An H.-J."/>
            <person name="Andrews-Pfannkoch C."/>
            <person name="Baldwin D."/>
            <person name="Ballew R.M."/>
            <person name="Basu A."/>
            <person name="Baxendale J."/>
            <person name="Bayraktaroglu L."/>
            <person name="Beasley E.M."/>
            <person name="Beeson K.Y."/>
            <person name="Benos P.V."/>
            <person name="Berman B.P."/>
            <person name="Bhandari D."/>
            <person name="Bolshakov S."/>
            <person name="Borkova D."/>
            <person name="Botchan M.R."/>
            <person name="Bouck J."/>
            <person name="Brokstein P."/>
            <person name="Brottier P."/>
            <person name="Burtis K.C."/>
            <person name="Busam D.A."/>
            <person name="Butler H."/>
            <person name="Cadieu E."/>
            <person name="Center A."/>
            <person name="Chandra I."/>
            <person name="Cherry J.M."/>
            <person name="Cawley S."/>
            <person name="Dahlke C."/>
            <person name="Davenport L.B."/>
            <person name="Davies P."/>
            <person name="de Pablos B."/>
            <person name="Delcher A."/>
            <person name="Deng Z."/>
            <person name="Mays A.D."/>
            <person name="Dew I."/>
            <person name="Dietz S.M."/>
            <person name="Dodson K."/>
            <person name="Doup L.E."/>
            <person name="Downes M."/>
            <person name="Dugan-Rocha S."/>
            <person name="Dunkov B.C."/>
            <person name="Dunn P."/>
            <person name="Durbin K.J."/>
            <person name="Evangelista C.C."/>
            <person name="Ferraz C."/>
            <person name="Ferriera S."/>
            <person name="Fleischmann W."/>
            <person name="Fosler C."/>
            <person name="Gabrielian A.E."/>
            <person name="Garg N.S."/>
            <person name="Gelbart W.M."/>
            <person name="Glasser K."/>
            <person name="Glodek A."/>
            <person name="Gong F."/>
            <person name="Gorrell J.H."/>
            <person name="Gu Z."/>
            <person name="Guan P."/>
            <person name="Harris M."/>
            <person name="Harris N.L."/>
            <person name="Harvey D.A."/>
            <person name="Heiman T.J."/>
            <person name="Hernandez J.R."/>
            <person name="Houck J."/>
            <person name="Hostin D."/>
            <person name="Houston K.A."/>
            <person name="Howland T.J."/>
            <person name="Wei M.-H."/>
            <person name="Ibegwam C."/>
            <person name="Jalali M."/>
            <person name="Kalush F."/>
            <person name="Karpen G.H."/>
            <person name="Ke Z."/>
            <person name="Kennison J.A."/>
            <person name="Ketchum K.A."/>
            <person name="Kimmel B.E."/>
            <person name="Kodira C.D."/>
            <person name="Kraft C.L."/>
            <person name="Kravitz S."/>
            <person name="Kulp D."/>
            <person name="Lai Z."/>
            <person name="Lasko P."/>
            <person name="Lei Y."/>
            <person name="Levitsky A.A."/>
            <person name="Li J.H."/>
            <person name="Li Z."/>
            <person name="Liang Y."/>
            <person name="Lin X."/>
            <person name="Liu X."/>
            <person name="Mattei B."/>
            <person name="McIntosh T.C."/>
            <person name="McLeod M.P."/>
            <person name="McPherson D."/>
            <person name="Merkulov G."/>
            <person name="Milshina N.V."/>
            <person name="Mobarry C."/>
            <person name="Morris J."/>
            <person name="Moshrefi A."/>
            <person name="Mount S.M."/>
            <person name="Moy M."/>
            <person name="Murphy B."/>
            <person name="Murphy L."/>
            <person name="Muzny D.M."/>
            <person name="Nelson D.L."/>
            <person name="Nelson D.R."/>
            <person name="Nelson K.A."/>
            <person name="Nixon K."/>
            <person name="Nusskern D.R."/>
            <person name="Pacleb J.M."/>
            <person name="Palazzolo M."/>
            <person name="Pittman G.S."/>
            <person name="Pan S."/>
            <person name="Pollard J."/>
            <person name="Puri V."/>
            <person name="Reese M.G."/>
            <person name="Reinert K."/>
            <person name="Remington K."/>
            <person name="Saunders R.D.C."/>
            <person name="Scheeler F."/>
            <person name="Shen H."/>
            <person name="Shue B.C."/>
            <person name="Siden-Kiamos I."/>
            <person name="Simpson M."/>
            <person name="Skupski M.P."/>
            <person name="Smith T.J."/>
            <person name="Spier E."/>
            <person name="Spradling A.C."/>
            <person name="Stapleton M."/>
            <person name="Strong R."/>
            <person name="Sun E."/>
            <person name="Svirskas R."/>
            <person name="Tector C."/>
            <person name="Turner R."/>
            <person name="Venter E."/>
            <person name="Wang A.H."/>
            <person name="Wang X."/>
            <person name="Wang Z.-Y."/>
            <person name="Wassarman D.A."/>
            <person name="Weinstock G.M."/>
            <person name="Weissenbach J."/>
            <person name="Williams S.M."/>
            <person name="Woodage T."/>
            <person name="Worley K.C."/>
            <person name="Wu D."/>
            <person name="Yang S."/>
            <person name="Yao Q.A."/>
            <person name="Ye J."/>
            <person name="Yeh R.-F."/>
            <person name="Zaveri J.S."/>
            <person name="Zhan M."/>
            <person name="Zhang G."/>
            <person name="Zhao Q."/>
            <person name="Zheng L."/>
            <person name="Zheng X.H."/>
            <person name="Zhong F.N."/>
            <person name="Zhong W."/>
            <person name="Zhou X."/>
            <person name="Zhu S.C."/>
            <person name="Zhu X."/>
            <person name="Smith H.O."/>
            <person name="Gibbs R.A."/>
            <person name="Myers E.W."/>
            <person name="Rubin G.M."/>
            <person name="Venter J.C."/>
        </authorList>
    </citation>
    <scope>NUCLEOTIDE SEQUENCE [LARGE SCALE GENOMIC DNA]</scope>
    <source>
        <strain>Berkeley</strain>
    </source>
</reference>
<reference key="3">
    <citation type="journal article" date="2002" name="Genome Biol.">
        <title>Annotation of the Drosophila melanogaster euchromatic genome: a systematic review.</title>
        <authorList>
            <person name="Misra S."/>
            <person name="Crosby M.A."/>
            <person name="Mungall C.J."/>
            <person name="Matthews B.B."/>
            <person name="Campbell K.S."/>
            <person name="Hradecky P."/>
            <person name="Huang Y."/>
            <person name="Kaminker J.S."/>
            <person name="Millburn G.H."/>
            <person name="Prochnik S.E."/>
            <person name="Smith C.D."/>
            <person name="Tupy J.L."/>
            <person name="Whitfield E.J."/>
            <person name="Bayraktaroglu L."/>
            <person name="Berman B.P."/>
            <person name="Bettencourt B.R."/>
            <person name="Celniker S.E."/>
            <person name="de Grey A.D.N.J."/>
            <person name="Drysdale R.A."/>
            <person name="Harris N.L."/>
            <person name="Richter J."/>
            <person name="Russo S."/>
            <person name="Schroeder A.J."/>
            <person name="Shu S.Q."/>
            <person name="Stapleton M."/>
            <person name="Yamada C."/>
            <person name="Ashburner M."/>
            <person name="Gelbart W.M."/>
            <person name="Rubin G.M."/>
            <person name="Lewis S.E."/>
        </authorList>
    </citation>
    <scope>GENOME REANNOTATION</scope>
    <source>
        <strain>Berkeley</strain>
    </source>
</reference>
<reference key="4">
    <citation type="submission" date="2010-08" db="EMBL/GenBank/DDBJ databases">
        <authorList>
            <person name="Stapleton M."/>
            <person name="Booth B."/>
            <person name="Carlson J."/>
            <person name="Chavez C."/>
            <person name="Frise E."/>
            <person name="George R."/>
            <person name="Pacleb J."/>
            <person name="Park S."/>
            <person name="Wan K."/>
            <person name="Yu C."/>
            <person name="Celniker S."/>
        </authorList>
    </citation>
    <scope>NUCLEOTIDE SEQUENCE [LARGE SCALE MRNA] (ISOFORM C)</scope>
    <source>
        <strain>Berkeley</strain>
    </source>
</reference>
<reference key="5">
    <citation type="journal article" date="1998" name="Development">
        <title>Positive and negative regulation of Easter, a member of the serine protease family that controls dorsal-ventral patterning in the Drosophila embryo.</title>
        <authorList>
            <person name="Misra S."/>
            <person name="Hecht P."/>
            <person name="Maeda R."/>
            <person name="Anderson K.V."/>
        </authorList>
    </citation>
    <scope>FUNCTION</scope>
    <scope>CLEAVAGE OF EASTER</scope>
    <scope>SUBCELLULAR LOCATION</scope>
</reference>
<reference key="6">
    <citation type="journal article" date="2003" name="J. Biol. Chem.">
        <title>Three-dimensional models of proteases involved in patterning of the Drosophila Embryo. Crucial role of predicted cation binding sites.</title>
        <authorList>
            <person name="Rose T."/>
            <person name="LeMosy E.K."/>
            <person name="Cantwell A.M."/>
            <person name="Banerjee-Roy D."/>
            <person name="Skeath J.B."/>
            <person name="Di Cera E."/>
        </authorList>
    </citation>
    <scope>FUNCTION</scope>
    <scope>MUTAGENESIS OF TYR-513</scope>
</reference>
<reference key="7">
    <citation type="journal article" date="2010" name="Curr. Biol.">
        <title>Pipe-dependent ventral processing of Easter by Snake is the defining step in Drosophila embryo DV axis formation.</title>
        <authorList>
            <person name="Cho Y.S."/>
            <person name="Stevens L.M."/>
            <person name="Stein D."/>
        </authorList>
    </citation>
    <scope>FUNCTION</scope>
    <scope>CLEAVED BY NDL</scope>
</reference>
<sequence>MRLHLAAILILCIEHVTKAVAQGMPISPCPKVFQYRFDGSEWFGLMAVRSPDGHQPLHIRVTLSMRGKPTTYTQNYLGEIELLTRGKFTHNAPVLYKIRFPKHHFPPKLLLMSANNHVICFGSGEHSIFMTQIQLEHIRKLSFIPDKKSSLLLDPEEEEVRKTDDKPPSTPHIQFKKKPFAQAPKEICGRIDRDLDFHLSQRTESLHVAIGEPKSSDGITSPVFVDDDEDDVLEHQFVDESEAEAIESDSADSLPSITRGSWPWLAAIYVNNLTSLDFQCGGSLVSARVVISSAHCFKLFNKRYTSNEVLVFLGRHNLKNWNEEGSLAAPVDGIYIHPDFNSQLSSYDADIAVIILKDEVRFNTFIRPACLWSGSSKTEYIVGERGIVIGWSFDRTNRTRDQKLSSELPGKKSTDASAPKVVKAPIVGNAECFRANAHFRSLSSNRTFCAGIQAEERDTHQSGASIYTGISGAGLFIRRNNRWMLRGTVSAALPAVETPDAESSHKLCCKNQYIIYADVAKFLDWITAFVI</sequence>
<protein>
    <recommendedName>
        <fullName evidence="10">Serine protease gd</fullName>
        <ecNumber evidence="2">3.4.21.-</ecNumber>
    </recommendedName>
    <alternativeName>
        <fullName evidence="11">Protein gastrulation defective</fullName>
    </alternativeName>
</protein>
<gene>
    <name evidence="11" type="primary">gd</name>
    <name evidence="11" type="ORF">CG1505</name>
</gene>
<keyword id="KW-0025">Alternative splicing</keyword>
<keyword id="KW-0217">Developmental protein</keyword>
<keyword id="KW-1015">Disulfide bond</keyword>
<keyword id="KW-0325">Glycoprotein</keyword>
<keyword id="KW-0378">Hydrolase</keyword>
<keyword id="KW-0645">Protease</keyword>
<keyword id="KW-1185">Reference proteome</keyword>
<keyword id="KW-0964">Secreted</keyword>
<keyword id="KW-0720">Serine protease</keyword>
<keyword id="KW-0732">Signal</keyword>
<keyword id="KW-0865">Zymogen</keyword>
<organism evidence="12">
    <name type="scientific">Drosophila melanogaster</name>
    <name type="common">Fruit fly</name>
    <dbReference type="NCBI Taxonomy" id="7227"/>
    <lineage>
        <taxon>Eukaryota</taxon>
        <taxon>Metazoa</taxon>
        <taxon>Ecdysozoa</taxon>
        <taxon>Arthropoda</taxon>
        <taxon>Hexapoda</taxon>
        <taxon>Insecta</taxon>
        <taxon>Pterygota</taxon>
        <taxon>Neoptera</taxon>
        <taxon>Endopterygota</taxon>
        <taxon>Diptera</taxon>
        <taxon>Brachycera</taxon>
        <taxon>Muscomorpha</taxon>
        <taxon>Ephydroidea</taxon>
        <taxon>Drosophilidae</taxon>
        <taxon>Drosophila</taxon>
        <taxon>Sophophora</taxon>
    </lineage>
</organism>
<name>GD_DROME</name>
<dbReference type="EC" id="3.4.21.-" evidence="2"/>
<dbReference type="EMBL" id="AF056311">
    <property type="protein sequence ID" value="AAC13558.1"/>
    <property type="molecule type" value="mRNA"/>
</dbReference>
<dbReference type="EMBL" id="U09808">
    <property type="protein sequence ID" value="AAC24235.1"/>
    <property type="molecule type" value="Genomic_DNA"/>
</dbReference>
<dbReference type="EMBL" id="AE014298">
    <property type="protein sequence ID" value="AAF48122.3"/>
    <property type="molecule type" value="Genomic_DNA"/>
</dbReference>
<dbReference type="EMBL" id="AE014298">
    <property type="protein sequence ID" value="AGB95321.1"/>
    <property type="molecule type" value="Genomic_DNA"/>
</dbReference>
<dbReference type="EMBL" id="AE014298">
    <property type="protein sequence ID" value="AGB95322.1"/>
    <property type="molecule type" value="Genomic_DNA"/>
</dbReference>
<dbReference type="EMBL" id="AE014298">
    <property type="protein sequence ID" value="AGB95323.1"/>
    <property type="molecule type" value="Genomic_DNA"/>
</dbReference>
<dbReference type="EMBL" id="BT025896">
    <property type="protein sequence ID" value="ABG02140.1"/>
    <property type="status" value="ALT_SEQ"/>
    <property type="molecule type" value="mRNA"/>
</dbReference>
<dbReference type="EMBL" id="BT125069">
    <property type="protein sequence ID" value="ADK93997.1"/>
    <property type="status" value="ALT_INIT"/>
    <property type="molecule type" value="mRNA"/>
</dbReference>
<dbReference type="RefSeq" id="NP_001259478.1">
    <molecule id="O62589-2"/>
    <property type="nucleotide sequence ID" value="NM_001272549.1"/>
</dbReference>
<dbReference type="RefSeq" id="NP_001259479.1">
    <molecule id="O62589-1"/>
    <property type="nucleotide sequence ID" value="NM_001272550.1"/>
</dbReference>
<dbReference type="RefSeq" id="NP_001259480.1">
    <molecule id="O62589-3"/>
    <property type="nucleotide sequence ID" value="NM_001272551.1"/>
</dbReference>
<dbReference type="RefSeq" id="NP_001303552.1">
    <molecule id="O62589-2"/>
    <property type="nucleotide sequence ID" value="NM_001316623.1"/>
</dbReference>
<dbReference type="SMR" id="O62589"/>
<dbReference type="BioGRID" id="58564">
    <property type="interactions" value="4"/>
</dbReference>
<dbReference type="FunCoup" id="O62589">
    <property type="interactions" value="6"/>
</dbReference>
<dbReference type="IntAct" id="O62589">
    <property type="interactions" value="1"/>
</dbReference>
<dbReference type="STRING" id="7227.FBpp0304588"/>
<dbReference type="MEROPS" id="S01.202"/>
<dbReference type="GlyCosmos" id="O62589">
    <property type="glycosylation" value="3 sites, No reported glycans"/>
</dbReference>
<dbReference type="GlyGen" id="O62589">
    <property type="glycosylation" value="3 sites"/>
</dbReference>
<dbReference type="PaxDb" id="7227-FBpp0304588"/>
<dbReference type="DNASU" id="32159"/>
<dbReference type="EnsemblMetazoa" id="FBtr0332308">
    <molecule id="O62589-2"/>
    <property type="protein sequence ID" value="FBpp0304587"/>
    <property type="gene ID" value="FBgn0000808"/>
</dbReference>
<dbReference type="EnsemblMetazoa" id="FBtr0332309">
    <molecule id="O62589-1"/>
    <property type="protein sequence ID" value="FBpp0304588"/>
    <property type="gene ID" value="FBgn0000808"/>
</dbReference>
<dbReference type="EnsemblMetazoa" id="FBtr0332310">
    <molecule id="O62589-3"/>
    <property type="protein sequence ID" value="FBpp0304589"/>
    <property type="gene ID" value="FBgn0000808"/>
</dbReference>
<dbReference type="EnsemblMetazoa" id="FBtr0347416">
    <molecule id="O62589-2"/>
    <property type="protein sequence ID" value="FBpp0312566"/>
    <property type="gene ID" value="FBgn0000808"/>
</dbReference>
<dbReference type="GeneID" id="32159"/>
<dbReference type="KEGG" id="dme:Dmel_CG1505"/>
<dbReference type="AGR" id="FB:FBgn0000808"/>
<dbReference type="CTD" id="619206"/>
<dbReference type="FlyBase" id="FBgn0000808">
    <property type="gene designation" value="gd"/>
</dbReference>
<dbReference type="VEuPathDB" id="VectorBase:FBgn0000808"/>
<dbReference type="eggNOG" id="KOG3627">
    <property type="taxonomic scope" value="Eukaryota"/>
</dbReference>
<dbReference type="GeneTree" id="ENSGT00940000171626"/>
<dbReference type="InParanoid" id="O62589"/>
<dbReference type="OMA" id="FIDWIMA"/>
<dbReference type="OrthoDB" id="238681at2759"/>
<dbReference type="Reactome" id="R-DME-209442">
    <property type="pathway name" value="Formation of the trans-membrane 'signalling complex'"/>
</dbReference>
<dbReference type="BioGRID-ORCS" id="32159">
    <property type="hits" value="0 hits in 1 CRISPR screen"/>
</dbReference>
<dbReference type="GenomeRNAi" id="32159"/>
<dbReference type="PRO" id="PR:O62589"/>
<dbReference type="Proteomes" id="UP000000803">
    <property type="component" value="Chromosome X"/>
</dbReference>
<dbReference type="Bgee" id="FBgn0000808">
    <property type="expression patterns" value="Expressed in adult class III enteroendocrine cell in adult midgut (Drosophila) and 7 other cell types or tissues"/>
</dbReference>
<dbReference type="ExpressionAtlas" id="O62589">
    <property type="expression patterns" value="baseline and differential"/>
</dbReference>
<dbReference type="GO" id="GO:0005576">
    <property type="term" value="C:extracellular region"/>
    <property type="evidence" value="ECO:0000304"/>
    <property type="project" value="Reactome"/>
</dbReference>
<dbReference type="GO" id="GO:0098595">
    <property type="term" value="C:perivitelline space"/>
    <property type="evidence" value="ECO:0000314"/>
    <property type="project" value="FlyBase"/>
</dbReference>
<dbReference type="GO" id="GO:0004252">
    <property type="term" value="F:serine-type endopeptidase activity"/>
    <property type="evidence" value="ECO:0000314"/>
    <property type="project" value="FlyBase"/>
</dbReference>
<dbReference type="GO" id="GO:0009950">
    <property type="term" value="P:dorsal/ventral axis specification"/>
    <property type="evidence" value="ECO:0000315"/>
    <property type="project" value="FlyBase"/>
</dbReference>
<dbReference type="GO" id="GO:0009953">
    <property type="term" value="P:dorsal/ventral pattern formation"/>
    <property type="evidence" value="ECO:0000315"/>
    <property type="project" value="UniProtKB"/>
</dbReference>
<dbReference type="GO" id="GO:0006508">
    <property type="term" value="P:proteolysis"/>
    <property type="evidence" value="ECO:0000314"/>
    <property type="project" value="FlyBase"/>
</dbReference>
<dbReference type="GO" id="GO:0160032">
    <property type="term" value="P:Toll receptor ligand protein activation cascade"/>
    <property type="evidence" value="ECO:0000314"/>
    <property type="project" value="FlyBase"/>
</dbReference>
<dbReference type="GO" id="GO:0007370">
    <property type="term" value="P:ventral furrow formation"/>
    <property type="evidence" value="ECO:0000315"/>
    <property type="project" value="UniProtKB"/>
</dbReference>
<dbReference type="GO" id="GO:0031638">
    <property type="term" value="P:zymogen activation"/>
    <property type="evidence" value="ECO:0000315"/>
    <property type="project" value="FlyBase"/>
</dbReference>
<dbReference type="CDD" id="cd00190">
    <property type="entry name" value="Tryp_SPc"/>
    <property type="match status" value="1"/>
</dbReference>
<dbReference type="FunFam" id="2.40.10.10:FF:000317">
    <property type="entry name" value="serine protease gd isoform X1"/>
    <property type="match status" value="1"/>
</dbReference>
<dbReference type="Gene3D" id="2.40.10.10">
    <property type="entry name" value="Trypsin-like serine proteases"/>
    <property type="match status" value="1"/>
</dbReference>
<dbReference type="InterPro" id="IPR031986">
    <property type="entry name" value="GD_N"/>
</dbReference>
<dbReference type="InterPro" id="IPR009003">
    <property type="entry name" value="Peptidase_S1_PA"/>
</dbReference>
<dbReference type="InterPro" id="IPR043504">
    <property type="entry name" value="Peptidase_S1_PA_chymotrypsin"/>
</dbReference>
<dbReference type="InterPro" id="IPR001254">
    <property type="entry name" value="Trypsin_dom"/>
</dbReference>
<dbReference type="PANTHER" id="PTHR24258:SF116">
    <property type="entry name" value="FI16631P1-RELATED"/>
    <property type="match status" value="1"/>
</dbReference>
<dbReference type="PANTHER" id="PTHR24258">
    <property type="entry name" value="SERINE PROTEASE-RELATED"/>
    <property type="match status" value="1"/>
</dbReference>
<dbReference type="Pfam" id="PF16030">
    <property type="entry name" value="GD_N"/>
    <property type="match status" value="1"/>
</dbReference>
<dbReference type="Pfam" id="PF00089">
    <property type="entry name" value="Trypsin"/>
    <property type="match status" value="1"/>
</dbReference>
<dbReference type="SMART" id="SM00020">
    <property type="entry name" value="Tryp_SPc"/>
    <property type="match status" value="1"/>
</dbReference>
<dbReference type="SUPFAM" id="SSF50494">
    <property type="entry name" value="Trypsin-like serine proteases"/>
    <property type="match status" value="1"/>
</dbReference>
<dbReference type="PROSITE" id="PS50240">
    <property type="entry name" value="TRYPSIN_DOM"/>
    <property type="match status" value="1"/>
</dbReference>